<sequence length="420" mass="44845">MDKFRVQGRTRLSGEVTISGAKNAALPILFAALLAEEPVELQNVPKLKDIDTTIKLLSQLGTKIERNNGSVFVDASAVNEFCAPYDLVKTMRASIWALGPLVARFGQGQVSLPGGCAIGARPVDLHITGLEQLGAEIKLEEGYVKASVNGRLKGAHIVMDKVSVGATVTIMSAATLAEGTTVIENAAREPEIVDTANFLNTLGAKISGAGTDRITIEGVTRLGGGVYRVLPDRIETGTFLVAAAISGGKVVCRQTRPDTLDAVLAKLREAGADIEVGDDWISLDMQGKRPKAITFRTAPHPGFPTDMQAQFSLLNLVAEGTGVITETIFENRFMHVPELIRMGAHAEIESNTVICYGVEQLSGAQVMATDLRASASLVLAGCIAEGVTIVDRIYHIDRGYERIEDKLRALGAKIERVKGE</sequence>
<dbReference type="EC" id="2.5.1.7" evidence="1"/>
<dbReference type="EMBL" id="CP000901">
    <property type="protein sequence ID" value="ABX85341.1"/>
    <property type="molecule type" value="Genomic_DNA"/>
</dbReference>
<dbReference type="RefSeq" id="WP_002210127.1">
    <property type="nucleotide sequence ID" value="NZ_CP009935.1"/>
</dbReference>
<dbReference type="SMR" id="A9R1S6"/>
<dbReference type="GeneID" id="57975146"/>
<dbReference type="KEGG" id="ypg:YpAngola_A1140"/>
<dbReference type="PATRIC" id="fig|349746.12.peg.2092"/>
<dbReference type="UniPathway" id="UPA00219"/>
<dbReference type="GO" id="GO:0005737">
    <property type="term" value="C:cytoplasm"/>
    <property type="evidence" value="ECO:0007669"/>
    <property type="project" value="UniProtKB-SubCell"/>
</dbReference>
<dbReference type="GO" id="GO:0008760">
    <property type="term" value="F:UDP-N-acetylglucosamine 1-carboxyvinyltransferase activity"/>
    <property type="evidence" value="ECO:0007669"/>
    <property type="project" value="UniProtKB-UniRule"/>
</dbReference>
<dbReference type="GO" id="GO:0051301">
    <property type="term" value="P:cell division"/>
    <property type="evidence" value="ECO:0007669"/>
    <property type="project" value="UniProtKB-KW"/>
</dbReference>
<dbReference type="GO" id="GO:0071555">
    <property type="term" value="P:cell wall organization"/>
    <property type="evidence" value="ECO:0007669"/>
    <property type="project" value="UniProtKB-KW"/>
</dbReference>
<dbReference type="GO" id="GO:0009252">
    <property type="term" value="P:peptidoglycan biosynthetic process"/>
    <property type="evidence" value="ECO:0007669"/>
    <property type="project" value="UniProtKB-UniRule"/>
</dbReference>
<dbReference type="GO" id="GO:0008360">
    <property type="term" value="P:regulation of cell shape"/>
    <property type="evidence" value="ECO:0007669"/>
    <property type="project" value="UniProtKB-KW"/>
</dbReference>
<dbReference type="GO" id="GO:0019277">
    <property type="term" value="P:UDP-N-acetylgalactosamine biosynthetic process"/>
    <property type="evidence" value="ECO:0007669"/>
    <property type="project" value="InterPro"/>
</dbReference>
<dbReference type="CDD" id="cd01555">
    <property type="entry name" value="UdpNAET"/>
    <property type="match status" value="1"/>
</dbReference>
<dbReference type="FunFam" id="3.65.10.10:FF:000002">
    <property type="entry name" value="UDP-N-acetylglucosamine 1-carboxyvinyltransferase"/>
    <property type="match status" value="1"/>
</dbReference>
<dbReference type="Gene3D" id="3.65.10.10">
    <property type="entry name" value="Enolpyruvate transferase domain"/>
    <property type="match status" value="2"/>
</dbReference>
<dbReference type="HAMAP" id="MF_00111">
    <property type="entry name" value="MurA"/>
    <property type="match status" value="1"/>
</dbReference>
<dbReference type="InterPro" id="IPR001986">
    <property type="entry name" value="Enolpyruvate_Tfrase_dom"/>
</dbReference>
<dbReference type="InterPro" id="IPR036968">
    <property type="entry name" value="Enolpyruvate_Tfrase_sf"/>
</dbReference>
<dbReference type="InterPro" id="IPR050068">
    <property type="entry name" value="MurA_subfamily"/>
</dbReference>
<dbReference type="InterPro" id="IPR013792">
    <property type="entry name" value="RNA3'P_cycl/enolpyr_Trfase_a/b"/>
</dbReference>
<dbReference type="InterPro" id="IPR005750">
    <property type="entry name" value="UDP_GlcNAc_COvinyl_MurA"/>
</dbReference>
<dbReference type="NCBIfam" id="TIGR01072">
    <property type="entry name" value="murA"/>
    <property type="match status" value="1"/>
</dbReference>
<dbReference type="NCBIfam" id="NF006873">
    <property type="entry name" value="PRK09369.1"/>
    <property type="match status" value="1"/>
</dbReference>
<dbReference type="PANTHER" id="PTHR43783">
    <property type="entry name" value="UDP-N-ACETYLGLUCOSAMINE 1-CARBOXYVINYLTRANSFERASE"/>
    <property type="match status" value="1"/>
</dbReference>
<dbReference type="PANTHER" id="PTHR43783:SF1">
    <property type="entry name" value="UDP-N-ACETYLGLUCOSAMINE 1-CARBOXYVINYLTRANSFERASE"/>
    <property type="match status" value="1"/>
</dbReference>
<dbReference type="Pfam" id="PF00275">
    <property type="entry name" value="EPSP_synthase"/>
    <property type="match status" value="1"/>
</dbReference>
<dbReference type="SUPFAM" id="SSF55205">
    <property type="entry name" value="EPT/RTPC-like"/>
    <property type="match status" value="1"/>
</dbReference>
<keyword id="KW-0131">Cell cycle</keyword>
<keyword id="KW-0132">Cell division</keyword>
<keyword id="KW-0133">Cell shape</keyword>
<keyword id="KW-0961">Cell wall biogenesis/degradation</keyword>
<keyword id="KW-0963">Cytoplasm</keyword>
<keyword id="KW-0573">Peptidoglycan synthesis</keyword>
<keyword id="KW-0670">Pyruvate</keyword>
<keyword id="KW-0808">Transferase</keyword>
<organism>
    <name type="scientific">Yersinia pestis bv. Antiqua (strain Angola)</name>
    <dbReference type="NCBI Taxonomy" id="349746"/>
    <lineage>
        <taxon>Bacteria</taxon>
        <taxon>Pseudomonadati</taxon>
        <taxon>Pseudomonadota</taxon>
        <taxon>Gammaproteobacteria</taxon>
        <taxon>Enterobacterales</taxon>
        <taxon>Yersiniaceae</taxon>
        <taxon>Yersinia</taxon>
    </lineage>
</organism>
<accession>A9R1S6</accession>
<comment type="function">
    <text evidence="1">Cell wall formation. Adds enolpyruvyl to UDP-N-acetylglucosamine.</text>
</comment>
<comment type="catalytic activity">
    <reaction evidence="1">
        <text>phosphoenolpyruvate + UDP-N-acetyl-alpha-D-glucosamine = UDP-N-acetyl-3-O-(1-carboxyvinyl)-alpha-D-glucosamine + phosphate</text>
        <dbReference type="Rhea" id="RHEA:18681"/>
        <dbReference type="ChEBI" id="CHEBI:43474"/>
        <dbReference type="ChEBI" id="CHEBI:57705"/>
        <dbReference type="ChEBI" id="CHEBI:58702"/>
        <dbReference type="ChEBI" id="CHEBI:68483"/>
        <dbReference type="EC" id="2.5.1.7"/>
    </reaction>
</comment>
<comment type="pathway">
    <text evidence="1">Cell wall biogenesis; peptidoglycan biosynthesis.</text>
</comment>
<comment type="subcellular location">
    <subcellularLocation>
        <location evidence="1">Cytoplasm</location>
    </subcellularLocation>
</comment>
<comment type="similarity">
    <text evidence="1">Belongs to the EPSP synthase family. MurA subfamily.</text>
</comment>
<proteinExistence type="inferred from homology"/>
<protein>
    <recommendedName>
        <fullName evidence="1">UDP-N-acetylglucosamine 1-carboxyvinyltransferase</fullName>
        <ecNumber evidence="1">2.5.1.7</ecNumber>
    </recommendedName>
    <alternativeName>
        <fullName evidence="1">Enoylpyruvate transferase</fullName>
    </alternativeName>
    <alternativeName>
        <fullName evidence="1">UDP-N-acetylglucosamine enolpyruvyl transferase</fullName>
        <shortName evidence="1">EPT</shortName>
    </alternativeName>
</protein>
<gene>
    <name evidence="1" type="primary">murA</name>
    <name type="ordered locus">YpAngola_A1140</name>
</gene>
<name>MURA_YERPG</name>
<reference key="1">
    <citation type="journal article" date="2010" name="J. Bacteriol.">
        <title>Genome sequence of the deep-rooted Yersinia pestis strain Angola reveals new insights into the evolution and pangenome of the plague bacterium.</title>
        <authorList>
            <person name="Eppinger M."/>
            <person name="Worsham P.L."/>
            <person name="Nikolich M.P."/>
            <person name="Riley D.R."/>
            <person name="Sebastian Y."/>
            <person name="Mou S."/>
            <person name="Achtman M."/>
            <person name="Lindler L.E."/>
            <person name="Ravel J."/>
        </authorList>
    </citation>
    <scope>NUCLEOTIDE SEQUENCE [LARGE SCALE GENOMIC DNA]</scope>
    <source>
        <strain>Angola</strain>
    </source>
</reference>
<evidence type="ECO:0000255" key="1">
    <source>
        <dbReference type="HAMAP-Rule" id="MF_00111"/>
    </source>
</evidence>
<feature type="chain" id="PRO_1000094739" description="UDP-N-acetylglucosamine 1-carboxyvinyltransferase">
    <location>
        <begin position="1"/>
        <end position="420"/>
    </location>
</feature>
<feature type="active site" description="Proton donor" evidence="1">
    <location>
        <position position="116"/>
    </location>
</feature>
<feature type="binding site" evidence="1">
    <location>
        <begin position="22"/>
        <end position="23"/>
    </location>
    <ligand>
        <name>phosphoenolpyruvate</name>
        <dbReference type="ChEBI" id="CHEBI:58702"/>
    </ligand>
</feature>
<feature type="binding site" evidence="1">
    <location>
        <position position="92"/>
    </location>
    <ligand>
        <name>UDP-N-acetyl-alpha-D-glucosamine</name>
        <dbReference type="ChEBI" id="CHEBI:57705"/>
    </ligand>
</feature>
<feature type="binding site" evidence="1">
    <location>
        <begin position="121"/>
        <end position="125"/>
    </location>
    <ligand>
        <name>UDP-N-acetyl-alpha-D-glucosamine</name>
        <dbReference type="ChEBI" id="CHEBI:57705"/>
    </ligand>
</feature>
<feature type="binding site" evidence="1">
    <location>
        <begin position="161"/>
        <end position="164"/>
    </location>
    <ligand>
        <name>UDP-N-acetyl-alpha-D-glucosamine</name>
        <dbReference type="ChEBI" id="CHEBI:57705"/>
    </ligand>
</feature>
<feature type="binding site" evidence="1">
    <location>
        <position position="306"/>
    </location>
    <ligand>
        <name>UDP-N-acetyl-alpha-D-glucosamine</name>
        <dbReference type="ChEBI" id="CHEBI:57705"/>
    </ligand>
</feature>
<feature type="binding site" evidence="1">
    <location>
        <position position="328"/>
    </location>
    <ligand>
        <name>UDP-N-acetyl-alpha-D-glucosamine</name>
        <dbReference type="ChEBI" id="CHEBI:57705"/>
    </ligand>
</feature>
<feature type="modified residue" description="2-(S-cysteinyl)pyruvic acid O-phosphothioketal" evidence="1">
    <location>
        <position position="116"/>
    </location>
</feature>